<feature type="chain" id="PRO_0000168800" description="Putative carbamate hydrolase RutD">
    <location>
        <begin position="1"/>
        <end position="266"/>
    </location>
</feature>
<organism>
    <name type="scientific">Escherichia coli (strain K12)</name>
    <dbReference type="NCBI Taxonomy" id="83333"/>
    <lineage>
        <taxon>Bacteria</taxon>
        <taxon>Pseudomonadati</taxon>
        <taxon>Pseudomonadota</taxon>
        <taxon>Gammaproteobacteria</taxon>
        <taxon>Enterobacterales</taxon>
        <taxon>Enterobacteriaceae</taxon>
        <taxon>Escherichia</taxon>
    </lineage>
</organism>
<protein>
    <recommendedName>
        <fullName evidence="7">Putative carbamate hydrolase RutD</fullName>
        <ecNumber evidence="8">3.5.1.-</ecNumber>
    </recommendedName>
    <alternativeName>
        <fullName>Aminohydrolase</fullName>
    </alternativeName>
</protein>
<keyword id="KW-0378">Hydrolase</keyword>
<keyword id="KW-1185">Reference proteome</keyword>
<reference key="1">
    <citation type="journal article" date="1996" name="DNA Res.">
        <title>A 718-kb DNA sequence of the Escherichia coli K-12 genome corresponding to the 12.7-28.0 min region on the linkage map.</title>
        <authorList>
            <person name="Oshima T."/>
            <person name="Aiba H."/>
            <person name="Baba T."/>
            <person name="Fujita K."/>
            <person name="Hayashi K."/>
            <person name="Honjo A."/>
            <person name="Ikemoto K."/>
            <person name="Inada T."/>
            <person name="Itoh T."/>
            <person name="Kajihara M."/>
            <person name="Kanai K."/>
            <person name="Kashimoto K."/>
            <person name="Kimura S."/>
            <person name="Kitagawa M."/>
            <person name="Makino K."/>
            <person name="Masuda S."/>
            <person name="Miki T."/>
            <person name="Mizobuchi K."/>
            <person name="Mori H."/>
            <person name="Motomura K."/>
            <person name="Nakamura Y."/>
            <person name="Nashimoto H."/>
            <person name="Nishio Y."/>
            <person name="Saito N."/>
            <person name="Sampei G."/>
            <person name="Seki Y."/>
            <person name="Tagami H."/>
            <person name="Takemoto K."/>
            <person name="Wada C."/>
            <person name="Yamamoto Y."/>
            <person name="Yano M."/>
            <person name="Horiuchi T."/>
        </authorList>
    </citation>
    <scope>NUCLEOTIDE SEQUENCE [LARGE SCALE GENOMIC DNA]</scope>
    <source>
        <strain>K12 / W3110 / ATCC 27325 / DSM 5911</strain>
    </source>
</reference>
<reference key="2">
    <citation type="journal article" date="1997" name="Science">
        <title>The complete genome sequence of Escherichia coli K-12.</title>
        <authorList>
            <person name="Blattner F.R."/>
            <person name="Plunkett G. III"/>
            <person name="Bloch C.A."/>
            <person name="Perna N.T."/>
            <person name="Burland V."/>
            <person name="Riley M."/>
            <person name="Collado-Vides J."/>
            <person name="Glasner J.D."/>
            <person name="Rode C.K."/>
            <person name="Mayhew G.F."/>
            <person name="Gregor J."/>
            <person name="Davis N.W."/>
            <person name="Kirkpatrick H.A."/>
            <person name="Goeden M.A."/>
            <person name="Rose D.J."/>
            <person name="Mau B."/>
            <person name="Shao Y."/>
        </authorList>
    </citation>
    <scope>NUCLEOTIDE SEQUENCE [LARGE SCALE GENOMIC DNA]</scope>
    <source>
        <strain>K12 / MG1655 / ATCC 47076</strain>
    </source>
</reference>
<reference key="3">
    <citation type="journal article" date="2006" name="Mol. Syst. Biol.">
        <title>Highly accurate genome sequences of Escherichia coli K-12 strains MG1655 and W3110.</title>
        <authorList>
            <person name="Hayashi K."/>
            <person name="Morooka N."/>
            <person name="Yamamoto Y."/>
            <person name="Fujita K."/>
            <person name="Isono K."/>
            <person name="Choi S."/>
            <person name="Ohtsubo E."/>
            <person name="Baba T."/>
            <person name="Wanner B.L."/>
            <person name="Mori H."/>
            <person name="Horiuchi T."/>
        </authorList>
    </citation>
    <scope>NUCLEOTIDE SEQUENCE [LARGE SCALE GENOMIC DNA]</scope>
    <source>
        <strain>K12 / W3110 / ATCC 27325 / DSM 5911</strain>
    </source>
</reference>
<reference key="4">
    <citation type="journal article" date="2000" name="Proc. Natl. Acad. Sci. U.S.A.">
        <title>Nitrogen regulatory protein C-controlled genes of Escherichia coli: scavenging as a defense against nitrogen limitation.</title>
        <authorList>
            <person name="Zimmer D.P."/>
            <person name="Soupene E."/>
            <person name="Lee H.L."/>
            <person name="Wendisch V.F."/>
            <person name="Khodursky A.B."/>
            <person name="Peter B.J."/>
            <person name="Bender R.A."/>
            <person name="Kustu S."/>
        </authorList>
    </citation>
    <scope>INDUCTION</scope>
</reference>
<reference key="5">
    <citation type="journal article" date="2006" name="Proc. Natl. Acad. Sci. U.S.A.">
        <title>A previously undescribed pathway for pyrimidine catabolism.</title>
        <authorList>
            <person name="Loh K.D."/>
            <person name="Gyaneshwar P."/>
            <person name="Markenscoff Papadimitriou E."/>
            <person name="Fong R."/>
            <person name="Kim K.-S."/>
            <person name="Parales R."/>
            <person name="Zhou Z."/>
            <person name="Inwood W."/>
            <person name="Kustu S."/>
        </authorList>
    </citation>
    <scope>FUNCTION IN PYRIMIDINE CATABOLISM AND NOMENCLATURE</scope>
    <source>
        <strain>K12 / MG1655 / ATCC 47076</strain>
    </source>
</reference>
<reference key="6">
    <citation type="journal article" date="2007" name="Mol. Microbiol.">
        <title>RutR is the uracil/thymine-sensing master regulator of a set of genes for synthesis and degradation of pyrimidines.</title>
        <authorList>
            <person name="Shimada T."/>
            <person name="Hirao K."/>
            <person name="Kori A."/>
            <person name="Yamamoto K."/>
            <person name="Ishihama A."/>
        </authorList>
    </citation>
    <scope>INDUCTION</scope>
</reference>
<reference key="7">
    <citation type="journal article" date="2010" name="J. Bacteriol.">
        <title>The Rut pathway for pyrimidine degradation: novel chemistry and toxicity problems.</title>
        <authorList>
            <person name="Kim K.S."/>
            <person name="Pelton J.G."/>
            <person name="Inwood W.B."/>
            <person name="Andersen U."/>
            <person name="Kustu S."/>
            <person name="Wemmer D.E."/>
        </authorList>
    </citation>
    <scope>DISRUPTION PHENOTYPE</scope>
</reference>
<reference key="8">
    <citation type="journal article" date="2021" name="J. Biol. Chem.">
        <title>The Rid family member RutC of Escherichia coli is a 3-aminoacrylate deaminase.</title>
        <authorList>
            <person name="Buckner B.A."/>
            <person name="Lato A.M."/>
            <person name="Campagna S.R."/>
            <person name="Downs D.M."/>
        </authorList>
    </citation>
    <scope>FUNCTION</scope>
    <scope>DISRUPTION PHENOTYPE</scope>
    <source>
        <strain>K12</strain>
    </source>
</reference>
<sequence>MKLSLSPPPYADAPVVVLISGLGGSGSYWLPQLAVLEQEYQVVCYDQRGTGNNPDTLAEDYSIAQMAAELHQALVAAGIEHYAVVGHALGALVGMQLALDYPASVTVLISVNGWLRINAHTRRCFQVRERLLYSGGAQAWVEAQPLFLYPADWMAARAPRLEAEDALALAHFQGKNNLLRRLNALKRADFSHHADRIRCPVQIICASDDLLVPTACSSELHAALPDSQKMVMPYGGHACNVTDPETFNALLLNGLASLLHHREAAL</sequence>
<gene>
    <name type="primary">rutD</name>
    <name type="synonym">ycdJ</name>
    <name type="ordered locus">b1009</name>
    <name type="ordered locus">JW0994</name>
</gene>
<accession>P75895</accession>
<name>RUTD_ECOLI</name>
<dbReference type="EC" id="3.5.1.-" evidence="8"/>
<dbReference type="EMBL" id="U00096">
    <property type="protein sequence ID" value="AAC74094.1"/>
    <property type="molecule type" value="Genomic_DNA"/>
</dbReference>
<dbReference type="EMBL" id="AP009048">
    <property type="protein sequence ID" value="BAA35776.1"/>
    <property type="molecule type" value="Genomic_DNA"/>
</dbReference>
<dbReference type="PIR" id="G64842">
    <property type="entry name" value="G64842"/>
</dbReference>
<dbReference type="RefSeq" id="NP_415529.1">
    <property type="nucleotide sequence ID" value="NC_000913.3"/>
</dbReference>
<dbReference type="RefSeq" id="WP_000777653.1">
    <property type="nucleotide sequence ID" value="NZ_SSZK01000002.1"/>
</dbReference>
<dbReference type="SMR" id="P75895"/>
<dbReference type="BioGRID" id="4262210">
    <property type="interactions" value="24"/>
</dbReference>
<dbReference type="FunCoup" id="P75895">
    <property type="interactions" value="81"/>
</dbReference>
<dbReference type="STRING" id="511145.b1009"/>
<dbReference type="ESTHER" id="ecoli-rutD">
    <property type="family name" value="RutD"/>
</dbReference>
<dbReference type="PaxDb" id="511145-b1009"/>
<dbReference type="EnsemblBacteria" id="AAC74094">
    <property type="protein sequence ID" value="AAC74094"/>
    <property type="gene ID" value="b1009"/>
</dbReference>
<dbReference type="GeneID" id="946586"/>
<dbReference type="KEGG" id="ecj:JW0994"/>
<dbReference type="KEGG" id="eco:b1009"/>
<dbReference type="KEGG" id="ecoc:C3026_06140"/>
<dbReference type="PATRIC" id="fig|1411691.4.peg.1262"/>
<dbReference type="EchoBASE" id="EB3616"/>
<dbReference type="eggNOG" id="COG2021">
    <property type="taxonomic scope" value="Bacteria"/>
</dbReference>
<dbReference type="HOGENOM" id="CLU_020336_50_1_6"/>
<dbReference type="InParanoid" id="P75895"/>
<dbReference type="OMA" id="WSSPNPH"/>
<dbReference type="OrthoDB" id="9804723at2"/>
<dbReference type="PhylomeDB" id="P75895"/>
<dbReference type="BioCyc" id="EcoCyc:G6520-MONOMER"/>
<dbReference type="PRO" id="PR:P75895"/>
<dbReference type="Proteomes" id="UP000000625">
    <property type="component" value="Chromosome"/>
</dbReference>
<dbReference type="GO" id="GO:0016787">
    <property type="term" value="F:hydrolase activity"/>
    <property type="evidence" value="ECO:0000318"/>
    <property type="project" value="GO_Central"/>
</dbReference>
<dbReference type="GO" id="GO:0016811">
    <property type="term" value="F:hydrolase activity, acting on carbon-nitrogen (but not peptide) bonds, in linear amides"/>
    <property type="evidence" value="ECO:0007669"/>
    <property type="project" value="InterPro"/>
</dbReference>
<dbReference type="GO" id="GO:0042803">
    <property type="term" value="F:protein homodimerization activity"/>
    <property type="evidence" value="ECO:0000314"/>
    <property type="project" value="EcoCyc"/>
</dbReference>
<dbReference type="GO" id="GO:0019740">
    <property type="term" value="P:nitrogen utilization"/>
    <property type="evidence" value="ECO:0000315"/>
    <property type="project" value="UniProtKB"/>
</dbReference>
<dbReference type="GO" id="GO:0006208">
    <property type="term" value="P:pyrimidine nucleobase catabolic process"/>
    <property type="evidence" value="ECO:0000315"/>
    <property type="project" value="EcoCyc"/>
</dbReference>
<dbReference type="GO" id="GO:0006212">
    <property type="term" value="P:uracil catabolic process"/>
    <property type="evidence" value="ECO:0000315"/>
    <property type="project" value="UniProtKB"/>
</dbReference>
<dbReference type="FunFam" id="3.40.50.1820:FF:000052">
    <property type="entry name" value="Putative aminoacrylate hydrolase RutD"/>
    <property type="match status" value="1"/>
</dbReference>
<dbReference type="Gene3D" id="3.40.50.1820">
    <property type="entry name" value="alpha/beta hydrolase"/>
    <property type="match status" value="1"/>
</dbReference>
<dbReference type="HAMAP" id="MF_00832">
    <property type="entry name" value="RutD"/>
    <property type="match status" value="1"/>
</dbReference>
<dbReference type="InterPro" id="IPR000073">
    <property type="entry name" value="AB_hydrolase_1"/>
</dbReference>
<dbReference type="InterPro" id="IPR029058">
    <property type="entry name" value="AB_hydrolase_fold"/>
</dbReference>
<dbReference type="InterPro" id="IPR050266">
    <property type="entry name" value="AB_hydrolase_sf"/>
</dbReference>
<dbReference type="InterPro" id="IPR019913">
    <property type="entry name" value="Pyrimidine_utilisation_RutD"/>
</dbReference>
<dbReference type="NCBIfam" id="TIGR03611">
    <property type="entry name" value="RutD"/>
    <property type="match status" value="1"/>
</dbReference>
<dbReference type="PANTHER" id="PTHR43798">
    <property type="entry name" value="MONOACYLGLYCEROL LIPASE"/>
    <property type="match status" value="1"/>
</dbReference>
<dbReference type="Pfam" id="PF00561">
    <property type="entry name" value="Abhydrolase_1"/>
    <property type="match status" value="1"/>
</dbReference>
<dbReference type="PRINTS" id="PR00111">
    <property type="entry name" value="ABHYDROLASE"/>
</dbReference>
<dbReference type="SUPFAM" id="SSF53474">
    <property type="entry name" value="alpha/beta-Hydrolases"/>
    <property type="match status" value="1"/>
</dbReference>
<proteinExistence type="evidence at protein level"/>
<evidence type="ECO:0000255" key="1">
    <source>
        <dbReference type="HAMAP-Rule" id="MF_00832"/>
    </source>
</evidence>
<evidence type="ECO:0000269" key="2">
    <source>
    </source>
</evidence>
<evidence type="ECO:0000269" key="3">
    <source>
    </source>
</evidence>
<evidence type="ECO:0000269" key="4">
    <source>
    </source>
</evidence>
<evidence type="ECO:0000269" key="5">
    <source>
    </source>
</evidence>
<evidence type="ECO:0000269" key="6">
    <source>
    </source>
</evidence>
<evidence type="ECO:0000305" key="7"/>
<evidence type="ECO:0000305" key="8">
    <source>
    </source>
</evidence>
<comment type="function">
    <text evidence="3 8">Involved in pyrimidine catabolism (PubMed:16540542). May facilitate the hydrolysis of carbamate, a reaction that can also occur spontaneously (Probable).</text>
</comment>
<comment type="catalytic activity">
    <reaction evidence="8">
        <text>carbamate + 2 H(+) = NH4(+) + CO2</text>
        <dbReference type="Rhea" id="RHEA:15649"/>
        <dbReference type="ChEBI" id="CHEBI:13941"/>
        <dbReference type="ChEBI" id="CHEBI:15378"/>
        <dbReference type="ChEBI" id="CHEBI:16526"/>
        <dbReference type="ChEBI" id="CHEBI:28938"/>
    </reaction>
</comment>
<comment type="induction">
    <text evidence="2 4">Up-regulated by the nitrogen regulatory protein C (NtrC also called GlnG) and repressed by RutR.</text>
</comment>
<comment type="disruption phenotype">
    <text evidence="5 6">Cells lacking this gene form less than the normal amount of malonic semialdehyde because a portion of the 3-carbon intermediate is diverted out of the Rut pathway (PubMed:20400551). It was shown later that defects could be due to polarity of the lesion on one or more of the downstream genes (PubMed:33839153).</text>
</comment>
<comment type="miscellaneous">
    <text>The Rut pathway degrades exogenous pyrimidines as the sole nitrogen source at room temperature but not at 37 degrees Celsius, a restriction that is apparently a consequence of an inadequate ability to remove toxic malonic semialdehyde at the higher temperature (RutE/YdfG function).</text>
</comment>
<comment type="similarity">
    <text evidence="1 7">Belongs to the AB hydrolase superfamily. Hydrolase RutD family.</text>
</comment>